<reference key="1">
    <citation type="journal article" date="2003" name="Science">
        <title>Role of mobile DNA in the evolution of vancomycin-resistant Enterococcus faecalis.</title>
        <authorList>
            <person name="Paulsen I.T."/>
            <person name="Banerjei L."/>
            <person name="Myers G.S.A."/>
            <person name="Nelson K.E."/>
            <person name="Seshadri R."/>
            <person name="Read T.D."/>
            <person name="Fouts D.E."/>
            <person name="Eisen J.A."/>
            <person name="Gill S.R."/>
            <person name="Heidelberg J.F."/>
            <person name="Tettelin H."/>
            <person name="Dodson R.J."/>
            <person name="Umayam L.A."/>
            <person name="Brinkac L.M."/>
            <person name="Beanan M.J."/>
            <person name="Daugherty S.C."/>
            <person name="DeBoy R.T."/>
            <person name="Durkin S.A."/>
            <person name="Kolonay J.F."/>
            <person name="Madupu R."/>
            <person name="Nelson W.C."/>
            <person name="Vamathevan J.J."/>
            <person name="Tran B."/>
            <person name="Upton J."/>
            <person name="Hansen T."/>
            <person name="Shetty J."/>
            <person name="Khouri H.M."/>
            <person name="Utterback T.R."/>
            <person name="Radune D."/>
            <person name="Ketchum K.A."/>
            <person name="Dougherty B.A."/>
            <person name="Fraser C.M."/>
        </authorList>
    </citation>
    <scope>NUCLEOTIDE SEQUENCE [LARGE SCALE GENOMIC DNA]</scope>
    <source>
        <strain>ATCC 700802 / V583</strain>
    </source>
</reference>
<accession>Q839F2</accession>
<name>RL5_ENTFA</name>
<gene>
    <name evidence="1" type="primary">rplE</name>
    <name type="ordered locus">EF_0218</name>
</gene>
<sequence length="179" mass="20093">MNRLKEKYIKEVTPSLVEKFNYSSVMQTPKVDKIVINMGVGDAVSNAKNLDKAVEELALITGQKPLITKAKKSIAGFRLREGMPIGAKVTLRGERMYEFLDKLVTVSLPRVRDFHGVSKKAFDGRGNYTLGIKEQLIFPEVDYDLVDKVRGMDIVIVTTANTDEESRELLAQLGMPFQK</sequence>
<organism>
    <name type="scientific">Enterococcus faecalis (strain ATCC 700802 / V583)</name>
    <dbReference type="NCBI Taxonomy" id="226185"/>
    <lineage>
        <taxon>Bacteria</taxon>
        <taxon>Bacillati</taxon>
        <taxon>Bacillota</taxon>
        <taxon>Bacilli</taxon>
        <taxon>Lactobacillales</taxon>
        <taxon>Enterococcaceae</taxon>
        <taxon>Enterococcus</taxon>
    </lineage>
</organism>
<comment type="function">
    <text evidence="1">This is one of the proteins that bind and probably mediate the attachment of the 5S RNA into the large ribosomal subunit, where it forms part of the central protuberance. In the 70S ribosome it contacts protein S13 of the 30S subunit (bridge B1b), connecting the 2 subunits; this bridge is implicated in subunit movement. Contacts the P site tRNA; the 5S rRNA and some of its associated proteins might help stabilize positioning of ribosome-bound tRNAs.</text>
</comment>
<comment type="subunit">
    <text evidence="1">Part of the 50S ribosomal subunit; part of the 5S rRNA/L5/L18/L25 subcomplex. Contacts the 5S rRNA and the P site tRNA. Forms a bridge to the 30S subunit in the 70S ribosome.</text>
</comment>
<comment type="similarity">
    <text evidence="1">Belongs to the universal ribosomal protein uL5 family.</text>
</comment>
<keyword id="KW-0002">3D-structure</keyword>
<keyword id="KW-1185">Reference proteome</keyword>
<keyword id="KW-0687">Ribonucleoprotein</keyword>
<keyword id="KW-0689">Ribosomal protein</keyword>
<keyword id="KW-0694">RNA-binding</keyword>
<keyword id="KW-0699">rRNA-binding</keyword>
<keyword id="KW-0820">tRNA-binding</keyword>
<proteinExistence type="evidence at protein level"/>
<feature type="chain" id="PRO_0000124928" description="Large ribosomal subunit protein uL5">
    <location>
        <begin position="1"/>
        <end position="179"/>
    </location>
</feature>
<feature type="helix" evidence="3">
    <location>
        <begin position="5"/>
        <end position="19"/>
    </location>
</feature>
<feature type="strand" evidence="3">
    <location>
        <begin position="23"/>
        <end position="25"/>
    </location>
</feature>
<feature type="strand" evidence="3">
    <location>
        <begin position="31"/>
        <end position="38"/>
    </location>
</feature>
<feature type="turn" evidence="3">
    <location>
        <begin position="43"/>
        <end position="45"/>
    </location>
</feature>
<feature type="helix" evidence="3">
    <location>
        <begin position="50"/>
        <end position="60"/>
    </location>
</feature>
<feature type="strand" evidence="3">
    <location>
        <begin position="61"/>
        <end position="63"/>
    </location>
</feature>
<feature type="helix" evidence="3">
    <location>
        <begin position="75"/>
        <end position="77"/>
    </location>
</feature>
<feature type="strand" evidence="3">
    <location>
        <begin position="86"/>
        <end position="91"/>
    </location>
</feature>
<feature type="helix" evidence="3">
    <location>
        <begin position="93"/>
        <end position="105"/>
    </location>
</feature>
<feature type="helix" evidence="3">
    <location>
        <begin position="108"/>
        <end position="110"/>
    </location>
</feature>
<feature type="turn" evidence="3">
    <location>
        <begin position="123"/>
        <end position="125"/>
    </location>
</feature>
<feature type="strand" evidence="3">
    <location>
        <begin position="138"/>
        <end position="141"/>
    </location>
</feature>
<feature type="strand" evidence="3">
    <location>
        <begin position="153"/>
        <end position="158"/>
    </location>
</feature>
<feature type="helix" evidence="3">
    <location>
        <begin position="163"/>
        <end position="171"/>
    </location>
</feature>
<dbReference type="EMBL" id="AE016830">
    <property type="protein sequence ID" value="AAO80087.1"/>
    <property type="molecule type" value="Genomic_DNA"/>
</dbReference>
<dbReference type="RefSeq" id="NP_814016.1">
    <property type="nucleotide sequence ID" value="NC_004668.1"/>
</dbReference>
<dbReference type="RefSeq" id="WP_002356213.1">
    <property type="nucleotide sequence ID" value="NZ_KE136524.1"/>
</dbReference>
<dbReference type="PDB" id="6WU9">
    <property type="method" value="EM"/>
    <property type="resolution" value="2.90 A"/>
    <property type="chains" value="F=2-178"/>
</dbReference>
<dbReference type="PDB" id="7P7Q">
    <property type="method" value="EM"/>
    <property type="resolution" value="2.40 A"/>
    <property type="chains" value="J=1-179"/>
</dbReference>
<dbReference type="PDB" id="7P7R">
    <property type="method" value="EM"/>
    <property type="resolution" value="2.90 A"/>
    <property type="chains" value="J=1-179"/>
</dbReference>
<dbReference type="PDBsum" id="6WU9"/>
<dbReference type="PDBsum" id="7P7Q"/>
<dbReference type="PDBsum" id="7P7R"/>
<dbReference type="EMDB" id="EMD-13241"/>
<dbReference type="EMDB" id="EMD-13242"/>
<dbReference type="SMR" id="Q839F2"/>
<dbReference type="STRING" id="226185.EF_0218"/>
<dbReference type="EnsemblBacteria" id="AAO80087">
    <property type="protein sequence ID" value="AAO80087"/>
    <property type="gene ID" value="EF_0218"/>
</dbReference>
<dbReference type="GeneID" id="60892713"/>
<dbReference type="KEGG" id="efa:EF0218"/>
<dbReference type="PATRIC" id="fig|226185.45.peg.48"/>
<dbReference type="eggNOG" id="COG0094">
    <property type="taxonomic scope" value="Bacteria"/>
</dbReference>
<dbReference type="HOGENOM" id="CLU_061015_2_1_9"/>
<dbReference type="Proteomes" id="UP000001415">
    <property type="component" value="Chromosome"/>
</dbReference>
<dbReference type="GO" id="GO:1990904">
    <property type="term" value="C:ribonucleoprotein complex"/>
    <property type="evidence" value="ECO:0007669"/>
    <property type="project" value="UniProtKB-KW"/>
</dbReference>
<dbReference type="GO" id="GO:0005840">
    <property type="term" value="C:ribosome"/>
    <property type="evidence" value="ECO:0007669"/>
    <property type="project" value="UniProtKB-KW"/>
</dbReference>
<dbReference type="GO" id="GO:0019843">
    <property type="term" value="F:rRNA binding"/>
    <property type="evidence" value="ECO:0007669"/>
    <property type="project" value="UniProtKB-UniRule"/>
</dbReference>
<dbReference type="GO" id="GO:0003735">
    <property type="term" value="F:structural constituent of ribosome"/>
    <property type="evidence" value="ECO:0007669"/>
    <property type="project" value="InterPro"/>
</dbReference>
<dbReference type="GO" id="GO:0000049">
    <property type="term" value="F:tRNA binding"/>
    <property type="evidence" value="ECO:0007669"/>
    <property type="project" value="UniProtKB-UniRule"/>
</dbReference>
<dbReference type="GO" id="GO:0006412">
    <property type="term" value="P:translation"/>
    <property type="evidence" value="ECO:0007669"/>
    <property type="project" value="UniProtKB-UniRule"/>
</dbReference>
<dbReference type="FunFam" id="3.30.1440.10:FF:000001">
    <property type="entry name" value="50S ribosomal protein L5"/>
    <property type="match status" value="1"/>
</dbReference>
<dbReference type="Gene3D" id="3.30.1440.10">
    <property type="match status" value="1"/>
</dbReference>
<dbReference type="HAMAP" id="MF_01333_B">
    <property type="entry name" value="Ribosomal_uL5_B"/>
    <property type="match status" value="1"/>
</dbReference>
<dbReference type="InterPro" id="IPR002132">
    <property type="entry name" value="Ribosomal_uL5"/>
</dbReference>
<dbReference type="InterPro" id="IPR020930">
    <property type="entry name" value="Ribosomal_uL5_bac-type"/>
</dbReference>
<dbReference type="InterPro" id="IPR031309">
    <property type="entry name" value="Ribosomal_uL5_C"/>
</dbReference>
<dbReference type="InterPro" id="IPR020929">
    <property type="entry name" value="Ribosomal_uL5_CS"/>
</dbReference>
<dbReference type="InterPro" id="IPR022803">
    <property type="entry name" value="Ribosomal_uL5_dom_sf"/>
</dbReference>
<dbReference type="InterPro" id="IPR031310">
    <property type="entry name" value="Ribosomal_uL5_N"/>
</dbReference>
<dbReference type="NCBIfam" id="NF000585">
    <property type="entry name" value="PRK00010.1"/>
    <property type="match status" value="1"/>
</dbReference>
<dbReference type="PANTHER" id="PTHR11994">
    <property type="entry name" value="60S RIBOSOMAL PROTEIN L11-RELATED"/>
    <property type="match status" value="1"/>
</dbReference>
<dbReference type="Pfam" id="PF00281">
    <property type="entry name" value="Ribosomal_L5"/>
    <property type="match status" value="1"/>
</dbReference>
<dbReference type="Pfam" id="PF00673">
    <property type="entry name" value="Ribosomal_L5_C"/>
    <property type="match status" value="1"/>
</dbReference>
<dbReference type="PIRSF" id="PIRSF002161">
    <property type="entry name" value="Ribosomal_L5"/>
    <property type="match status" value="1"/>
</dbReference>
<dbReference type="SUPFAM" id="SSF55282">
    <property type="entry name" value="RL5-like"/>
    <property type="match status" value="1"/>
</dbReference>
<dbReference type="PROSITE" id="PS00358">
    <property type="entry name" value="RIBOSOMAL_L5"/>
    <property type="match status" value="1"/>
</dbReference>
<evidence type="ECO:0000255" key="1">
    <source>
        <dbReference type="HAMAP-Rule" id="MF_01333"/>
    </source>
</evidence>
<evidence type="ECO:0000305" key="2"/>
<evidence type="ECO:0007829" key="3">
    <source>
        <dbReference type="PDB" id="6WU9"/>
    </source>
</evidence>
<protein>
    <recommendedName>
        <fullName evidence="1">Large ribosomal subunit protein uL5</fullName>
    </recommendedName>
    <alternativeName>
        <fullName evidence="2">50S ribosomal protein L5</fullName>
    </alternativeName>
</protein>